<comment type="function">
    <text evidence="1">Catalyzes the conversion of pppGpp to ppGpp. Guanosine pentaphosphate (pppGpp) is a cytoplasmic signaling molecule which together with ppGpp controls the 'stringent response', an adaptive process that allows bacteria to respond to amino acid starvation, resulting in the coordinated regulation of numerous cellular activities.</text>
</comment>
<comment type="catalytic activity">
    <reaction evidence="1">
        <text>guanosine 3'-diphosphate 5'-triphosphate + H2O = guanosine 3',5'-bis(diphosphate) + phosphate + H(+)</text>
        <dbReference type="Rhea" id="RHEA:13073"/>
        <dbReference type="ChEBI" id="CHEBI:15377"/>
        <dbReference type="ChEBI" id="CHEBI:15378"/>
        <dbReference type="ChEBI" id="CHEBI:43474"/>
        <dbReference type="ChEBI" id="CHEBI:77828"/>
        <dbReference type="ChEBI" id="CHEBI:142410"/>
        <dbReference type="EC" id="3.6.1.40"/>
    </reaction>
</comment>
<comment type="pathway">
    <text evidence="1">Purine metabolism; ppGpp biosynthesis; ppGpp from GTP: step 2/2.</text>
</comment>
<comment type="similarity">
    <text evidence="1">Belongs to the GppA/Ppx family. GppA subfamily.</text>
</comment>
<protein>
    <recommendedName>
        <fullName evidence="1">Guanosine-5'-triphosphate,3'-diphosphate pyrophosphatase</fullName>
        <ecNumber evidence="1">3.6.1.40</ecNumber>
    </recommendedName>
    <alternativeName>
        <fullName evidence="1">Guanosine pentaphosphate phosphohydrolase</fullName>
    </alternativeName>
    <alternativeName>
        <fullName evidence="1">pppGpp-5'-phosphohydrolase</fullName>
    </alternativeName>
</protein>
<organism>
    <name type="scientific">Vibrio cholerae serotype O1 (strain ATCC 39315 / El Tor Inaba N16961)</name>
    <dbReference type="NCBI Taxonomy" id="243277"/>
    <lineage>
        <taxon>Bacteria</taxon>
        <taxon>Pseudomonadati</taxon>
        <taxon>Pseudomonadota</taxon>
        <taxon>Gammaproteobacteria</taxon>
        <taxon>Vibrionales</taxon>
        <taxon>Vibrionaceae</taxon>
        <taxon>Vibrio</taxon>
    </lineage>
</organism>
<name>GPPA_VIBCH</name>
<feature type="chain" id="PRO_0000194292" description="Guanosine-5'-triphosphate,3'-diphosphate pyrophosphatase">
    <location>
        <begin position="1"/>
        <end position="497"/>
    </location>
</feature>
<accession>Q9KV53</accession>
<evidence type="ECO:0000255" key="1">
    <source>
        <dbReference type="HAMAP-Rule" id="MF_01550"/>
    </source>
</evidence>
<sequence>MSQAVSSPLYAAIDLGSNSFHMLVVRHIDGSVQTMAKIKRKVRLAAGLDEHNALSLDAMQRGWDCLSLFAERLQDIPAENIRIVGTATLRTATNAGEFIAKANQILGHPIDVISGEEEAATIYKGVAHTSGGLGRRLVVDIGGASTELIIGEGFEAKALTSLKMGCVTWLERHFKDRQLTATNFNNAILAAKQMLDPILTQYTELGWNVCVGASGTVQALQEIMLAQGMDEVITLTKLKRLQKQAMLADHLEELDIEGLTLERALVFPSGLSILIAIFESLNIEAMTLAGGALREGLVYEMVQDLRQEDIRARTIRCVQTRYQIDSAYGDQVATLASKLLAQCGGEAWINEPQAEMLLRTAAKLHEIGLTIDFKKGGEHSAYLLQHLDLPGYTRAQKHYLGEIVRRYREQLTSLPEQYALSGTSGKRVLRLLRLAVLLSHRRSPALEPMVELSAQEDKLTLTLDGEWLAKNPLTRTELELEANRQTDIGWPLSIECH</sequence>
<gene>
    <name evidence="1" type="primary">gppA</name>
    <name type="ordered locus">VC_0304</name>
</gene>
<dbReference type="EC" id="3.6.1.40" evidence="1"/>
<dbReference type="EMBL" id="AE003852">
    <property type="protein sequence ID" value="AAF93478.1"/>
    <property type="molecule type" value="Genomic_DNA"/>
</dbReference>
<dbReference type="PIR" id="B82340">
    <property type="entry name" value="B82340"/>
</dbReference>
<dbReference type="RefSeq" id="NP_229959.1">
    <property type="nucleotide sequence ID" value="NC_002505.1"/>
</dbReference>
<dbReference type="RefSeq" id="WP_000076046.1">
    <property type="nucleotide sequence ID" value="NZ_LT906614.1"/>
</dbReference>
<dbReference type="SMR" id="Q9KV53"/>
<dbReference type="STRING" id="243277.VC_0304"/>
<dbReference type="DNASU" id="2614974"/>
<dbReference type="EnsemblBacteria" id="AAF93478">
    <property type="protein sequence ID" value="AAF93478"/>
    <property type="gene ID" value="VC_0304"/>
</dbReference>
<dbReference type="KEGG" id="vch:VC_0304"/>
<dbReference type="PATRIC" id="fig|243277.26.peg.285"/>
<dbReference type="eggNOG" id="COG0248">
    <property type="taxonomic scope" value="Bacteria"/>
</dbReference>
<dbReference type="HOGENOM" id="CLU_025908_4_0_6"/>
<dbReference type="UniPathway" id="UPA00908">
    <property type="reaction ID" value="UER00885"/>
</dbReference>
<dbReference type="Proteomes" id="UP000000584">
    <property type="component" value="Chromosome 1"/>
</dbReference>
<dbReference type="GO" id="GO:0008894">
    <property type="term" value="F:guanosine-5'-triphosphate,3'-diphosphate diphosphatase activity"/>
    <property type="evidence" value="ECO:0000318"/>
    <property type="project" value="GO_Central"/>
</dbReference>
<dbReference type="GO" id="GO:0015974">
    <property type="term" value="P:guanosine pentaphosphate catabolic process"/>
    <property type="evidence" value="ECO:0007669"/>
    <property type="project" value="InterPro"/>
</dbReference>
<dbReference type="GO" id="GO:0015970">
    <property type="term" value="P:guanosine tetraphosphate biosynthetic process"/>
    <property type="evidence" value="ECO:0007669"/>
    <property type="project" value="UniProtKB-UniRule"/>
</dbReference>
<dbReference type="GO" id="GO:0015949">
    <property type="term" value="P:nucleobase-containing small molecule interconversion"/>
    <property type="evidence" value="ECO:0000318"/>
    <property type="project" value="GO_Central"/>
</dbReference>
<dbReference type="CDD" id="cd24117">
    <property type="entry name" value="ASKHA_NBD_EcGppA-like"/>
    <property type="match status" value="1"/>
</dbReference>
<dbReference type="FunFam" id="3.30.420.150:FF:000001">
    <property type="entry name" value="Guanosine-5'-triphosphate,3'-diphosphate pyrophosphatase"/>
    <property type="match status" value="1"/>
</dbReference>
<dbReference type="FunFam" id="3.30.420.40:FF:000023">
    <property type="entry name" value="Guanosine-5'-triphosphate,3'-diphosphate pyrophosphatase"/>
    <property type="match status" value="1"/>
</dbReference>
<dbReference type="Gene3D" id="3.30.420.40">
    <property type="match status" value="1"/>
</dbReference>
<dbReference type="Gene3D" id="3.30.420.150">
    <property type="entry name" value="Exopolyphosphatase. Domain 2"/>
    <property type="match status" value="1"/>
</dbReference>
<dbReference type="Gene3D" id="1.10.3210.10">
    <property type="entry name" value="Hypothetical protein af1432"/>
    <property type="match status" value="1"/>
</dbReference>
<dbReference type="HAMAP" id="MF_01550">
    <property type="entry name" value="GppA"/>
    <property type="match status" value="1"/>
</dbReference>
<dbReference type="InterPro" id="IPR043129">
    <property type="entry name" value="ATPase_NBD"/>
</dbReference>
<dbReference type="InterPro" id="IPR050273">
    <property type="entry name" value="GppA/Ppx_hydrolase"/>
</dbReference>
<dbReference type="InterPro" id="IPR023709">
    <property type="entry name" value="Guo-5TP_3DP_PyrP"/>
</dbReference>
<dbReference type="InterPro" id="IPR048950">
    <property type="entry name" value="Ppx_GppA_C"/>
</dbReference>
<dbReference type="InterPro" id="IPR003695">
    <property type="entry name" value="Ppx_GppA_N"/>
</dbReference>
<dbReference type="InterPro" id="IPR030673">
    <property type="entry name" value="PyroPPase_GppA_Ppx"/>
</dbReference>
<dbReference type="NCBIfam" id="NF008260">
    <property type="entry name" value="PRK11031.1"/>
    <property type="match status" value="1"/>
</dbReference>
<dbReference type="PANTHER" id="PTHR30005">
    <property type="entry name" value="EXOPOLYPHOSPHATASE"/>
    <property type="match status" value="1"/>
</dbReference>
<dbReference type="PANTHER" id="PTHR30005:SF0">
    <property type="entry name" value="RETROGRADE REGULATION PROTEIN 2"/>
    <property type="match status" value="1"/>
</dbReference>
<dbReference type="Pfam" id="PF02541">
    <property type="entry name" value="Ppx-GppA"/>
    <property type="match status" value="1"/>
</dbReference>
<dbReference type="Pfam" id="PF21447">
    <property type="entry name" value="Ppx-GppA_III"/>
    <property type="match status" value="1"/>
</dbReference>
<dbReference type="PIRSF" id="PIRSF001267">
    <property type="entry name" value="Pyrophosphatase_GppA_Ppx"/>
    <property type="match status" value="1"/>
</dbReference>
<dbReference type="SUPFAM" id="SSF53067">
    <property type="entry name" value="Actin-like ATPase domain"/>
    <property type="match status" value="2"/>
</dbReference>
<dbReference type="SUPFAM" id="SSF109604">
    <property type="entry name" value="HD-domain/PDEase-like"/>
    <property type="match status" value="1"/>
</dbReference>
<keyword id="KW-0378">Hydrolase</keyword>
<keyword id="KW-1185">Reference proteome</keyword>
<proteinExistence type="inferred from homology"/>
<reference key="1">
    <citation type="journal article" date="2000" name="Nature">
        <title>DNA sequence of both chromosomes of the cholera pathogen Vibrio cholerae.</title>
        <authorList>
            <person name="Heidelberg J.F."/>
            <person name="Eisen J.A."/>
            <person name="Nelson W.C."/>
            <person name="Clayton R.A."/>
            <person name="Gwinn M.L."/>
            <person name="Dodson R.J."/>
            <person name="Haft D.H."/>
            <person name="Hickey E.K."/>
            <person name="Peterson J.D."/>
            <person name="Umayam L.A."/>
            <person name="Gill S.R."/>
            <person name="Nelson K.E."/>
            <person name="Read T.D."/>
            <person name="Tettelin H."/>
            <person name="Richardson D.L."/>
            <person name="Ermolaeva M.D."/>
            <person name="Vamathevan J.J."/>
            <person name="Bass S."/>
            <person name="Qin H."/>
            <person name="Dragoi I."/>
            <person name="Sellers P."/>
            <person name="McDonald L.A."/>
            <person name="Utterback T.R."/>
            <person name="Fleischmann R.D."/>
            <person name="Nierman W.C."/>
            <person name="White O."/>
            <person name="Salzberg S.L."/>
            <person name="Smith H.O."/>
            <person name="Colwell R.R."/>
            <person name="Mekalanos J.J."/>
            <person name="Venter J.C."/>
            <person name="Fraser C.M."/>
        </authorList>
    </citation>
    <scope>NUCLEOTIDE SEQUENCE [LARGE SCALE GENOMIC DNA]</scope>
    <source>
        <strain>ATCC 39315 / El Tor Inaba N16961</strain>
    </source>
</reference>